<gene>
    <name evidence="1" type="primary">lspA</name>
    <name type="ordered locus">NGR_c00270</name>
</gene>
<comment type="function">
    <text evidence="1">This protein specifically catalyzes the removal of signal peptides from prolipoproteins.</text>
</comment>
<comment type="catalytic activity">
    <reaction evidence="1">
        <text>Release of signal peptides from bacterial membrane prolipoproteins. Hydrolyzes -Xaa-Yaa-Zaa-|-(S,diacylglyceryl)Cys-, in which Xaa is hydrophobic (preferably Leu), and Yaa (Ala or Ser) and Zaa (Gly or Ala) have small, neutral side chains.</text>
        <dbReference type="EC" id="3.4.23.36"/>
    </reaction>
</comment>
<comment type="pathway">
    <text evidence="1">Protein modification; lipoprotein biosynthesis (signal peptide cleavage).</text>
</comment>
<comment type="subcellular location">
    <subcellularLocation>
        <location evidence="1">Cell inner membrane</location>
        <topology evidence="1">Multi-pass membrane protein</topology>
    </subcellularLocation>
</comment>
<comment type="similarity">
    <text evidence="1">Belongs to the peptidase A8 family.</text>
</comment>
<proteinExistence type="inferred from homology"/>
<reference key="1">
    <citation type="journal article" date="2009" name="Appl. Environ. Microbiol.">
        <title>Rhizobium sp. strain NGR234 possesses a remarkable number of secretion systems.</title>
        <authorList>
            <person name="Schmeisser C."/>
            <person name="Liesegang H."/>
            <person name="Krysciak D."/>
            <person name="Bakkou N."/>
            <person name="Le Quere A."/>
            <person name="Wollherr A."/>
            <person name="Heinemeyer I."/>
            <person name="Morgenstern B."/>
            <person name="Pommerening-Roeser A."/>
            <person name="Flores M."/>
            <person name="Palacios R."/>
            <person name="Brenner S."/>
            <person name="Gottschalk G."/>
            <person name="Schmitz R.A."/>
            <person name="Broughton W.J."/>
            <person name="Perret X."/>
            <person name="Strittmatter A.W."/>
            <person name="Streit W.R."/>
        </authorList>
    </citation>
    <scope>NUCLEOTIDE SEQUENCE [LARGE SCALE GENOMIC DNA]</scope>
    <source>
        <strain>NBRC 101917 / NGR234</strain>
    </source>
</reference>
<organism>
    <name type="scientific">Sinorhizobium fredii (strain NBRC 101917 / NGR234)</name>
    <dbReference type="NCBI Taxonomy" id="394"/>
    <lineage>
        <taxon>Bacteria</taxon>
        <taxon>Pseudomonadati</taxon>
        <taxon>Pseudomonadota</taxon>
        <taxon>Alphaproteobacteria</taxon>
        <taxon>Hyphomicrobiales</taxon>
        <taxon>Rhizobiaceae</taxon>
        <taxon>Sinorhizobium/Ensifer group</taxon>
        <taxon>Sinorhizobium</taxon>
    </lineage>
</organism>
<accession>C3MEK8</accession>
<name>LSPA_SINFN</name>
<evidence type="ECO:0000255" key="1">
    <source>
        <dbReference type="HAMAP-Rule" id="MF_00161"/>
    </source>
</evidence>
<sequence length="166" mass="18733">MSERNTLFSRPLPIALFILVALVADQAIKYLVEAFLPFQEAVPVVPMLALYRTYNYGVAFSMLSGMEGWFIVGMRLAVVAFVLWLWRRTPKDRFFAHLGYAMIIAGALGNLVDRLLFGYVIDYILFHTATWSFAVFNLADSFITVGAGAIILDELLQTKKTRSLKL</sequence>
<keyword id="KW-0064">Aspartyl protease</keyword>
<keyword id="KW-0997">Cell inner membrane</keyword>
<keyword id="KW-1003">Cell membrane</keyword>
<keyword id="KW-0378">Hydrolase</keyword>
<keyword id="KW-0472">Membrane</keyword>
<keyword id="KW-0645">Protease</keyword>
<keyword id="KW-1185">Reference proteome</keyword>
<keyword id="KW-0812">Transmembrane</keyword>
<keyword id="KW-1133">Transmembrane helix</keyword>
<protein>
    <recommendedName>
        <fullName evidence="1">Lipoprotein signal peptidase</fullName>
        <ecNumber evidence="1">3.4.23.36</ecNumber>
    </recommendedName>
    <alternativeName>
        <fullName evidence="1">Prolipoprotein signal peptidase</fullName>
    </alternativeName>
    <alternativeName>
        <fullName evidence="1">Signal peptidase II</fullName>
        <shortName evidence="1">SPase II</shortName>
    </alternativeName>
</protein>
<dbReference type="EC" id="3.4.23.36" evidence="1"/>
<dbReference type="EMBL" id="CP001389">
    <property type="protein sequence ID" value="ACP23831.1"/>
    <property type="molecule type" value="Genomic_DNA"/>
</dbReference>
<dbReference type="RefSeq" id="WP_012706616.1">
    <property type="nucleotide sequence ID" value="NC_012587.1"/>
</dbReference>
<dbReference type="RefSeq" id="YP_002824584.1">
    <property type="nucleotide sequence ID" value="NC_012587.1"/>
</dbReference>
<dbReference type="SMR" id="C3MEK8"/>
<dbReference type="STRING" id="394.NGR_c00270"/>
<dbReference type="KEGG" id="rhi:NGR_c00270"/>
<dbReference type="PATRIC" id="fig|394.7.peg.2817"/>
<dbReference type="eggNOG" id="COG0597">
    <property type="taxonomic scope" value="Bacteria"/>
</dbReference>
<dbReference type="HOGENOM" id="CLU_083252_4_3_5"/>
<dbReference type="OrthoDB" id="9810259at2"/>
<dbReference type="UniPathway" id="UPA00665"/>
<dbReference type="Proteomes" id="UP000001054">
    <property type="component" value="Chromosome"/>
</dbReference>
<dbReference type="GO" id="GO:0005886">
    <property type="term" value="C:plasma membrane"/>
    <property type="evidence" value="ECO:0007669"/>
    <property type="project" value="UniProtKB-SubCell"/>
</dbReference>
<dbReference type="GO" id="GO:0004190">
    <property type="term" value="F:aspartic-type endopeptidase activity"/>
    <property type="evidence" value="ECO:0007669"/>
    <property type="project" value="UniProtKB-UniRule"/>
</dbReference>
<dbReference type="GO" id="GO:0006508">
    <property type="term" value="P:proteolysis"/>
    <property type="evidence" value="ECO:0007669"/>
    <property type="project" value="UniProtKB-KW"/>
</dbReference>
<dbReference type="HAMAP" id="MF_00161">
    <property type="entry name" value="LspA"/>
    <property type="match status" value="1"/>
</dbReference>
<dbReference type="InterPro" id="IPR001872">
    <property type="entry name" value="Peptidase_A8"/>
</dbReference>
<dbReference type="NCBIfam" id="TIGR00077">
    <property type="entry name" value="lspA"/>
    <property type="match status" value="1"/>
</dbReference>
<dbReference type="PANTHER" id="PTHR33695">
    <property type="entry name" value="LIPOPROTEIN SIGNAL PEPTIDASE"/>
    <property type="match status" value="1"/>
</dbReference>
<dbReference type="PANTHER" id="PTHR33695:SF1">
    <property type="entry name" value="LIPOPROTEIN SIGNAL PEPTIDASE"/>
    <property type="match status" value="1"/>
</dbReference>
<dbReference type="Pfam" id="PF01252">
    <property type="entry name" value="Peptidase_A8"/>
    <property type="match status" value="1"/>
</dbReference>
<dbReference type="PRINTS" id="PR00781">
    <property type="entry name" value="LIPOSIGPTASE"/>
</dbReference>
<dbReference type="PROSITE" id="PS00855">
    <property type="entry name" value="SPASE_II"/>
    <property type="match status" value="1"/>
</dbReference>
<feature type="chain" id="PRO_1000123503" description="Lipoprotein signal peptidase">
    <location>
        <begin position="1"/>
        <end position="166"/>
    </location>
</feature>
<feature type="transmembrane region" description="Helical" evidence="1">
    <location>
        <begin position="12"/>
        <end position="32"/>
    </location>
</feature>
<feature type="transmembrane region" description="Helical" evidence="1">
    <location>
        <begin position="66"/>
        <end position="86"/>
    </location>
</feature>
<feature type="transmembrane region" description="Helical" evidence="1">
    <location>
        <begin position="101"/>
        <end position="121"/>
    </location>
</feature>
<feature type="transmembrane region" description="Helical" evidence="1">
    <location>
        <begin position="132"/>
        <end position="152"/>
    </location>
</feature>
<feature type="active site" evidence="1">
    <location>
        <position position="122"/>
    </location>
</feature>
<feature type="active site" evidence="1">
    <location>
        <position position="140"/>
    </location>
</feature>